<keyword id="KW-0665">Pyrimidine biosynthesis</keyword>
<keyword id="KW-0808">Transferase</keyword>
<evidence type="ECO:0000255" key="1">
    <source>
        <dbReference type="HAMAP-Rule" id="MF_00001"/>
    </source>
</evidence>
<dbReference type="EC" id="2.1.3.2" evidence="1"/>
<dbReference type="EMBL" id="CP001661">
    <property type="protein sequence ID" value="ACT18360.1"/>
    <property type="molecule type" value="Genomic_DNA"/>
</dbReference>
<dbReference type="SMR" id="C6DZ52"/>
<dbReference type="STRING" id="443144.GM21_2312"/>
<dbReference type="KEGG" id="gem:GM21_2312"/>
<dbReference type="eggNOG" id="COG0540">
    <property type="taxonomic scope" value="Bacteria"/>
</dbReference>
<dbReference type="HOGENOM" id="CLU_043846_2_0_7"/>
<dbReference type="OrthoDB" id="9774690at2"/>
<dbReference type="UniPathway" id="UPA00070">
    <property type="reaction ID" value="UER00116"/>
</dbReference>
<dbReference type="GO" id="GO:0005829">
    <property type="term" value="C:cytosol"/>
    <property type="evidence" value="ECO:0007669"/>
    <property type="project" value="TreeGrafter"/>
</dbReference>
<dbReference type="GO" id="GO:0016597">
    <property type="term" value="F:amino acid binding"/>
    <property type="evidence" value="ECO:0007669"/>
    <property type="project" value="InterPro"/>
</dbReference>
<dbReference type="GO" id="GO:0004070">
    <property type="term" value="F:aspartate carbamoyltransferase activity"/>
    <property type="evidence" value="ECO:0007669"/>
    <property type="project" value="UniProtKB-UniRule"/>
</dbReference>
<dbReference type="GO" id="GO:0006207">
    <property type="term" value="P:'de novo' pyrimidine nucleobase biosynthetic process"/>
    <property type="evidence" value="ECO:0007669"/>
    <property type="project" value="InterPro"/>
</dbReference>
<dbReference type="GO" id="GO:0044205">
    <property type="term" value="P:'de novo' UMP biosynthetic process"/>
    <property type="evidence" value="ECO:0007669"/>
    <property type="project" value="UniProtKB-UniRule"/>
</dbReference>
<dbReference type="GO" id="GO:0006520">
    <property type="term" value="P:amino acid metabolic process"/>
    <property type="evidence" value="ECO:0007669"/>
    <property type="project" value="InterPro"/>
</dbReference>
<dbReference type="FunFam" id="3.40.50.1370:FF:000007">
    <property type="entry name" value="Aspartate carbamoyltransferase"/>
    <property type="match status" value="1"/>
</dbReference>
<dbReference type="Gene3D" id="3.40.50.1370">
    <property type="entry name" value="Aspartate/ornithine carbamoyltransferase"/>
    <property type="match status" value="2"/>
</dbReference>
<dbReference type="HAMAP" id="MF_00001">
    <property type="entry name" value="Asp_carb_tr"/>
    <property type="match status" value="1"/>
</dbReference>
<dbReference type="InterPro" id="IPR006132">
    <property type="entry name" value="Asp/Orn_carbamoyltranf_P-bd"/>
</dbReference>
<dbReference type="InterPro" id="IPR006130">
    <property type="entry name" value="Asp/Orn_carbamoylTrfase"/>
</dbReference>
<dbReference type="InterPro" id="IPR036901">
    <property type="entry name" value="Asp/Orn_carbamoylTrfase_sf"/>
</dbReference>
<dbReference type="InterPro" id="IPR002082">
    <property type="entry name" value="Asp_carbamoyltransf"/>
</dbReference>
<dbReference type="InterPro" id="IPR006131">
    <property type="entry name" value="Asp_carbamoyltransf_Asp/Orn-bd"/>
</dbReference>
<dbReference type="NCBIfam" id="TIGR00670">
    <property type="entry name" value="asp_carb_tr"/>
    <property type="match status" value="1"/>
</dbReference>
<dbReference type="NCBIfam" id="NF002032">
    <property type="entry name" value="PRK00856.1"/>
    <property type="match status" value="1"/>
</dbReference>
<dbReference type="PANTHER" id="PTHR45753:SF6">
    <property type="entry name" value="ASPARTATE CARBAMOYLTRANSFERASE"/>
    <property type="match status" value="1"/>
</dbReference>
<dbReference type="PANTHER" id="PTHR45753">
    <property type="entry name" value="ORNITHINE CARBAMOYLTRANSFERASE, MITOCHONDRIAL"/>
    <property type="match status" value="1"/>
</dbReference>
<dbReference type="Pfam" id="PF00185">
    <property type="entry name" value="OTCace"/>
    <property type="match status" value="1"/>
</dbReference>
<dbReference type="Pfam" id="PF02729">
    <property type="entry name" value="OTCace_N"/>
    <property type="match status" value="1"/>
</dbReference>
<dbReference type="PRINTS" id="PR00100">
    <property type="entry name" value="AOTCASE"/>
</dbReference>
<dbReference type="PRINTS" id="PR00101">
    <property type="entry name" value="ATCASE"/>
</dbReference>
<dbReference type="SUPFAM" id="SSF53671">
    <property type="entry name" value="Aspartate/ornithine carbamoyltransferase"/>
    <property type="match status" value="1"/>
</dbReference>
<dbReference type="PROSITE" id="PS00097">
    <property type="entry name" value="CARBAMOYLTRANSFERASE"/>
    <property type="match status" value="1"/>
</dbReference>
<protein>
    <recommendedName>
        <fullName evidence="1">Aspartate carbamoyltransferase catalytic subunit</fullName>
        <ecNumber evidence="1">2.1.3.2</ecNumber>
    </recommendedName>
    <alternativeName>
        <fullName evidence="1">Aspartate transcarbamylase</fullName>
        <shortName evidence="1">ATCase</shortName>
    </alternativeName>
</protein>
<organism>
    <name type="scientific">Geobacter sp. (strain M21)</name>
    <dbReference type="NCBI Taxonomy" id="443144"/>
    <lineage>
        <taxon>Bacteria</taxon>
        <taxon>Pseudomonadati</taxon>
        <taxon>Thermodesulfobacteriota</taxon>
        <taxon>Desulfuromonadia</taxon>
        <taxon>Geobacterales</taxon>
        <taxon>Geobacteraceae</taxon>
        <taxon>Geobacter</taxon>
    </lineage>
</organism>
<sequence length="310" mass="33784">MGFRHKDIIALKDLTKEEITLLLDTADSLSEINRRDIKKVPTLRGKTVINLFYEASTRTRTSFEIAAKRLSADAVNITASTSSVVKGETLSDTANNLLAMKPDIIVMRHAVSGAHEYLAKRVSCSVINAGDGAHEHPSQGLLDMLTMRQKFGKLDGLKVAIIGDITHSRVARSDIYGLTTMGSHVFLAGPPTMMPVGIERLGNVTVCKDMREAVDKADVVMMLRIQLERQGKTLLPSMREYSRYFGLNPEVLGLAKKNAIVMHPGPINRGVELASSVADCDQSAILAQVENGVAVRMAMLYHVCGGEPVE</sequence>
<gene>
    <name evidence="1" type="primary">pyrB</name>
    <name type="ordered locus">GM21_2312</name>
</gene>
<name>PYRB_GEOSM</name>
<comment type="function">
    <text evidence="1">Catalyzes the condensation of carbamoyl phosphate and aspartate to form carbamoyl aspartate and inorganic phosphate, the committed step in the de novo pyrimidine nucleotide biosynthesis pathway.</text>
</comment>
<comment type="catalytic activity">
    <reaction evidence="1">
        <text>carbamoyl phosphate + L-aspartate = N-carbamoyl-L-aspartate + phosphate + H(+)</text>
        <dbReference type="Rhea" id="RHEA:20013"/>
        <dbReference type="ChEBI" id="CHEBI:15378"/>
        <dbReference type="ChEBI" id="CHEBI:29991"/>
        <dbReference type="ChEBI" id="CHEBI:32814"/>
        <dbReference type="ChEBI" id="CHEBI:43474"/>
        <dbReference type="ChEBI" id="CHEBI:58228"/>
        <dbReference type="EC" id="2.1.3.2"/>
    </reaction>
</comment>
<comment type="pathway">
    <text evidence="1">Pyrimidine metabolism; UMP biosynthesis via de novo pathway; (S)-dihydroorotate from bicarbonate: step 2/3.</text>
</comment>
<comment type="subunit">
    <text evidence="1">Heterododecamer (2C3:3R2) of six catalytic PyrB chains organized as two trimers (C3), and six regulatory PyrI chains organized as three dimers (R2).</text>
</comment>
<comment type="similarity">
    <text evidence="1">Belongs to the aspartate/ornithine carbamoyltransferase superfamily. ATCase family.</text>
</comment>
<accession>C6DZ52</accession>
<feature type="chain" id="PRO_1000201592" description="Aspartate carbamoyltransferase catalytic subunit">
    <location>
        <begin position="1"/>
        <end position="310"/>
    </location>
</feature>
<feature type="binding site" evidence="1">
    <location>
        <position position="58"/>
    </location>
    <ligand>
        <name>carbamoyl phosphate</name>
        <dbReference type="ChEBI" id="CHEBI:58228"/>
    </ligand>
</feature>
<feature type="binding site" evidence="1">
    <location>
        <position position="59"/>
    </location>
    <ligand>
        <name>carbamoyl phosphate</name>
        <dbReference type="ChEBI" id="CHEBI:58228"/>
    </ligand>
</feature>
<feature type="binding site" evidence="1">
    <location>
        <position position="86"/>
    </location>
    <ligand>
        <name>L-aspartate</name>
        <dbReference type="ChEBI" id="CHEBI:29991"/>
    </ligand>
</feature>
<feature type="binding site" evidence="1">
    <location>
        <position position="108"/>
    </location>
    <ligand>
        <name>carbamoyl phosphate</name>
        <dbReference type="ChEBI" id="CHEBI:58228"/>
    </ligand>
</feature>
<feature type="binding site" evidence="1">
    <location>
        <position position="136"/>
    </location>
    <ligand>
        <name>carbamoyl phosphate</name>
        <dbReference type="ChEBI" id="CHEBI:58228"/>
    </ligand>
</feature>
<feature type="binding site" evidence="1">
    <location>
        <position position="139"/>
    </location>
    <ligand>
        <name>carbamoyl phosphate</name>
        <dbReference type="ChEBI" id="CHEBI:58228"/>
    </ligand>
</feature>
<feature type="binding site" evidence="1">
    <location>
        <position position="169"/>
    </location>
    <ligand>
        <name>L-aspartate</name>
        <dbReference type="ChEBI" id="CHEBI:29991"/>
    </ligand>
</feature>
<feature type="binding site" evidence="1">
    <location>
        <position position="224"/>
    </location>
    <ligand>
        <name>L-aspartate</name>
        <dbReference type="ChEBI" id="CHEBI:29991"/>
    </ligand>
</feature>
<feature type="binding site" evidence="1">
    <location>
        <position position="265"/>
    </location>
    <ligand>
        <name>carbamoyl phosphate</name>
        <dbReference type="ChEBI" id="CHEBI:58228"/>
    </ligand>
</feature>
<feature type="binding site" evidence="1">
    <location>
        <position position="266"/>
    </location>
    <ligand>
        <name>carbamoyl phosphate</name>
        <dbReference type="ChEBI" id="CHEBI:58228"/>
    </ligand>
</feature>
<proteinExistence type="inferred from homology"/>
<reference key="1">
    <citation type="submission" date="2009-07" db="EMBL/GenBank/DDBJ databases">
        <title>Complete sequence of Geobacter sp. M21.</title>
        <authorList>
            <consortium name="US DOE Joint Genome Institute"/>
            <person name="Lucas S."/>
            <person name="Copeland A."/>
            <person name="Lapidus A."/>
            <person name="Glavina del Rio T."/>
            <person name="Dalin E."/>
            <person name="Tice H."/>
            <person name="Bruce D."/>
            <person name="Goodwin L."/>
            <person name="Pitluck S."/>
            <person name="Saunders E."/>
            <person name="Brettin T."/>
            <person name="Detter J.C."/>
            <person name="Han C."/>
            <person name="Larimer F."/>
            <person name="Land M."/>
            <person name="Hauser L."/>
            <person name="Kyrpides N."/>
            <person name="Ovchinnikova G."/>
            <person name="Lovley D."/>
        </authorList>
    </citation>
    <scope>NUCLEOTIDE SEQUENCE [LARGE SCALE GENOMIC DNA]</scope>
    <source>
        <strain>M21</strain>
    </source>
</reference>